<organism>
    <name type="scientific">Drosophila C virus (strain EB)</name>
    <name type="common">DCV</name>
    <dbReference type="NCBI Taxonomy" id="865617"/>
    <lineage>
        <taxon>Viruses</taxon>
        <taxon>Riboviria</taxon>
        <taxon>Orthornavirae</taxon>
        <taxon>Pisuviricota</taxon>
        <taxon>Pisoniviricetes</taxon>
        <taxon>Picornavirales</taxon>
        <taxon>Dicistroviridae</taxon>
        <taxon>Cripavirus</taxon>
        <taxon>Cripavirus drosophilae</taxon>
    </lineage>
</organism>
<comment type="function">
    <text>Protein 1A functions as a suppressor of RNA-mediated gene silencing, an antiviral defense mechanism of insect cells. Binds to long dsRNA and to a lesser extent, to siRNA.</text>
</comment>
<comment type="function">
    <text>RNA-directed RNA polymerase replicates genomic and antigenomic RNA.</text>
</comment>
<comment type="catalytic activity">
    <reaction evidence="3">
        <text>RNA(n) + a ribonucleoside 5'-triphosphate = RNA(n+1) + diphosphate</text>
        <dbReference type="Rhea" id="RHEA:21248"/>
        <dbReference type="Rhea" id="RHEA-COMP:14527"/>
        <dbReference type="Rhea" id="RHEA-COMP:17342"/>
        <dbReference type="ChEBI" id="CHEBI:33019"/>
        <dbReference type="ChEBI" id="CHEBI:61557"/>
        <dbReference type="ChEBI" id="CHEBI:140395"/>
        <dbReference type="EC" id="2.7.7.48"/>
    </reaction>
</comment>
<comment type="PTM">
    <text>Protein 1A might be expressed through a ribosomal skip from one codon to the next without formation of a peptide bond.</text>
</comment>
<feature type="chain" id="PRO_0000399911" description="Replicase polyprotein">
    <location>
        <begin position="1"/>
        <end position="1759"/>
    </location>
</feature>
<feature type="chain" id="PRO_0000399913" description="Protein 2A" evidence="1">
    <location>
        <begin position="1"/>
        <end position="121"/>
    </location>
</feature>
<feature type="chain" id="PRO_0000399912" description="Protein 1A" evidence="1">
    <location>
        <begin position="1"/>
        <end position="97"/>
    </location>
</feature>
<feature type="chain" id="PRO_0000399914" description="Protein 2B" evidence="1">
    <location>
        <begin position="122"/>
        <end position="263"/>
    </location>
</feature>
<feature type="chain" id="PRO_0000399915" description="Protein 2C" evidence="1">
    <location>
        <begin position="264"/>
        <end position="701"/>
    </location>
</feature>
<feature type="chain" id="PRO_0000399916" description="Protein 3A" evidence="1">
    <location>
        <begin position="702"/>
        <end status="unknown"/>
    </location>
</feature>
<feature type="chain" id="PRO_0000399917" description="Protein 3B" evidence="1">
    <location>
        <begin status="unknown"/>
        <end position="901"/>
    </location>
</feature>
<feature type="chain" id="PRO_0000399918" description="3C-like protease" evidence="1">
    <location>
        <begin position="902"/>
        <end position="1209"/>
    </location>
</feature>
<feature type="chain" id="PRO_0000399919" description="RNA-directed RNA polymerase 3D-POL" evidence="1">
    <location>
        <begin position="1210"/>
        <end position="1759"/>
    </location>
</feature>
<feature type="domain" description="DRBM" evidence="2">
    <location>
        <begin position="23"/>
        <end position="90"/>
    </location>
</feature>
<feature type="domain" description="SF3 helicase" evidence="4">
    <location>
        <begin position="421"/>
        <end position="595"/>
    </location>
</feature>
<feature type="domain" description="Peptidase C3" evidence="5">
    <location>
        <begin position="950"/>
        <end position="1191"/>
    </location>
</feature>
<feature type="domain" description="RdRp catalytic" evidence="3">
    <location>
        <begin position="1483"/>
        <end position="1622"/>
    </location>
</feature>
<feature type="coiled-coil region" evidence="1">
    <location>
        <begin position="113"/>
        <end position="140"/>
    </location>
</feature>
<feature type="active site" description="For picornain 3C-like protease activity" evidence="5">
    <location>
        <position position="994"/>
    </location>
</feature>
<feature type="active site" description="For picornain 3C-like protease activity" evidence="5">
    <location>
        <position position="1054"/>
    </location>
</feature>
<feature type="active site" description="For picornain 3C-like protease activity" evidence="5">
    <location>
        <position position="1152"/>
    </location>
</feature>
<feature type="binding site" evidence="4">
    <location>
        <begin position="449"/>
        <end position="456"/>
    </location>
    <ligand>
        <name>ATP</name>
        <dbReference type="ChEBI" id="CHEBI:30616"/>
    </ligand>
</feature>
<feature type="site" description="Cleavage; by ribosomal skip" evidence="1">
    <location>
        <begin position="97"/>
        <end position="98"/>
    </location>
</feature>
<feature type="site" description="Cleavage; by 3C-like protease" evidence="1">
    <location>
        <begin position="701"/>
        <end position="702"/>
    </location>
</feature>
<feature type="site" description="Cleavage; by 3C-like protease" evidence="1">
    <location>
        <begin position="818"/>
        <end position="819"/>
    </location>
</feature>
<feature type="site" description="Cleavage; by 3C-like protease" evidence="1">
    <location>
        <begin position="901"/>
        <end position="902"/>
    </location>
</feature>
<feature type="site" description="Cleavage; by 3C-like protease" evidence="1">
    <location>
        <begin position="1209"/>
        <end position="1210"/>
    </location>
</feature>
<proteinExistence type="predicted"/>
<evidence type="ECO:0000255" key="1"/>
<evidence type="ECO:0000255" key="2">
    <source>
        <dbReference type="PROSITE-ProRule" id="PRU00266"/>
    </source>
</evidence>
<evidence type="ECO:0000255" key="3">
    <source>
        <dbReference type="PROSITE-ProRule" id="PRU00539"/>
    </source>
</evidence>
<evidence type="ECO:0000255" key="4">
    <source>
        <dbReference type="PROSITE-ProRule" id="PRU00551"/>
    </source>
</evidence>
<evidence type="ECO:0000255" key="5">
    <source>
        <dbReference type="PROSITE-ProRule" id="PRU01222"/>
    </source>
</evidence>
<dbReference type="EC" id="3.4.22.-"/>
<dbReference type="EC" id="2.7.7.48"/>
<dbReference type="EMBL" id="AF014388">
    <property type="protein sequence ID" value="AAC58807.1"/>
    <property type="molecule type" value="Genomic_RNA"/>
</dbReference>
<dbReference type="PIR" id="T03725">
    <property type="entry name" value="T03725"/>
</dbReference>
<dbReference type="RefSeq" id="NP_044945.1">
    <property type="nucleotide sequence ID" value="NC_001834.1"/>
</dbReference>
<dbReference type="SMR" id="O36966"/>
<dbReference type="KEGG" id="vg:1449523"/>
<dbReference type="Proteomes" id="UP000202505">
    <property type="component" value="Segment"/>
</dbReference>
<dbReference type="GO" id="GO:0044164">
    <property type="term" value="C:host cell cytosol"/>
    <property type="evidence" value="ECO:0000314"/>
    <property type="project" value="FlyBase"/>
</dbReference>
<dbReference type="GO" id="GO:0042025">
    <property type="term" value="C:host cell nucleus"/>
    <property type="evidence" value="ECO:0000314"/>
    <property type="project" value="FlyBase"/>
</dbReference>
<dbReference type="GO" id="GO:0005524">
    <property type="term" value="F:ATP binding"/>
    <property type="evidence" value="ECO:0007669"/>
    <property type="project" value="UniProtKB-KW"/>
</dbReference>
<dbReference type="GO" id="GO:0004197">
    <property type="term" value="F:cysteine-type endopeptidase activity"/>
    <property type="evidence" value="ECO:0007669"/>
    <property type="project" value="InterPro"/>
</dbReference>
<dbReference type="GO" id="GO:0106222">
    <property type="term" value="F:lncRNA binding"/>
    <property type="evidence" value="ECO:0000314"/>
    <property type="project" value="FlyBase"/>
</dbReference>
<dbReference type="GO" id="GO:0003724">
    <property type="term" value="F:RNA helicase activity"/>
    <property type="evidence" value="ECO:0007669"/>
    <property type="project" value="InterPro"/>
</dbReference>
<dbReference type="GO" id="GO:0003968">
    <property type="term" value="F:RNA-directed RNA polymerase activity"/>
    <property type="evidence" value="ECO:0007669"/>
    <property type="project" value="UniProtKB-KW"/>
</dbReference>
<dbReference type="GO" id="GO:0006351">
    <property type="term" value="P:DNA-templated transcription"/>
    <property type="evidence" value="ECO:0007669"/>
    <property type="project" value="InterPro"/>
</dbReference>
<dbReference type="GO" id="GO:0006508">
    <property type="term" value="P:proteolysis"/>
    <property type="evidence" value="ECO:0007669"/>
    <property type="project" value="UniProtKB-KW"/>
</dbReference>
<dbReference type="GO" id="GO:0052170">
    <property type="term" value="P:symbiont-mediated suppression of host innate immune response"/>
    <property type="evidence" value="ECO:0007669"/>
    <property type="project" value="UniProtKB-KW"/>
</dbReference>
<dbReference type="GO" id="GO:0039694">
    <property type="term" value="P:viral RNA genome replication"/>
    <property type="evidence" value="ECO:0007669"/>
    <property type="project" value="InterPro"/>
</dbReference>
<dbReference type="CDD" id="cd23194">
    <property type="entry name" value="Dicistroviridae_RdRp"/>
    <property type="match status" value="1"/>
</dbReference>
<dbReference type="CDD" id="cd00048">
    <property type="entry name" value="DSRM_SF"/>
    <property type="match status" value="1"/>
</dbReference>
<dbReference type="Gene3D" id="3.30.160.20">
    <property type="match status" value="1"/>
</dbReference>
<dbReference type="Gene3D" id="3.30.70.270">
    <property type="match status" value="1"/>
</dbReference>
<dbReference type="Gene3D" id="2.40.10.10">
    <property type="entry name" value="Trypsin-like serine proteases"/>
    <property type="match status" value="1"/>
</dbReference>
<dbReference type="InterPro" id="IPR043502">
    <property type="entry name" value="DNA/RNA_pol_sf"/>
</dbReference>
<dbReference type="InterPro" id="IPR014720">
    <property type="entry name" value="dsRBD_dom"/>
</dbReference>
<dbReference type="InterPro" id="IPR004004">
    <property type="entry name" value="Helic/Pol/Pept_Calicivir-typ"/>
</dbReference>
<dbReference type="InterPro" id="IPR000605">
    <property type="entry name" value="Helicase_SF3_ssDNA/RNA_vir"/>
</dbReference>
<dbReference type="InterPro" id="IPR014759">
    <property type="entry name" value="Helicase_SF3_ssRNA_vir"/>
</dbReference>
<dbReference type="InterPro" id="IPR044067">
    <property type="entry name" value="PCV_3C_PRO"/>
</dbReference>
<dbReference type="InterPro" id="IPR024387">
    <property type="entry name" value="Pept_C3G_Picornavir"/>
</dbReference>
<dbReference type="InterPro" id="IPR009003">
    <property type="entry name" value="Peptidase_S1_PA"/>
</dbReference>
<dbReference type="InterPro" id="IPR043504">
    <property type="entry name" value="Peptidase_S1_PA_chymotrypsin"/>
</dbReference>
<dbReference type="InterPro" id="IPR043128">
    <property type="entry name" value="Rev_trsase/Diguanyl_cyclase"/>
</dbReference>
<dbReference type="InterPro" id="IPR001205">
    <property type="entry name" value="RNA-dir_pol_C"/>
</dbReference>
<dbReference type="InterPro" id="IPR007094">
    <property type="entry name" value="RNA-dir_pol_PSvirus"/>
</dbReference>
<dbReference type="Pfam" id="PF12381">
    <property type="entry name" value="Peptidase_C3G"/>
    <property type="match status" value="1"/>
</dbReference>
<dbReference type="Pfam" id="PF00680">
    <property type="entry name" value="RdRP_1"/>
    <property type="match status" value="1"/>
</dbReference>
<dbReference type="Pfam" id="PF00910">
    <property type="entry name" value="RNA_helicase"/>
    <property type="match status" value="1"/>
</dbReference>
<dbReference type="PRINTS" id="PR00918">
    <property type="entry name" value="CALICVIRUSNS"/>
</dbReference>
<dbReference type="SMART" id="SM00358">
    <property type="entry name" value="DSRM"/>
    <property type="match status" value="1"/>
</dbReference>
<dbReference type="SUPFAM" id="SSF56672">
    <property type="entry name" value="DNA/RNA polymerases"/>
    <property type="match status" value="1"/>
</dbReference>
<dbReference type="SUPFAM" id="SSF54768">
    <property type="entry name" value="dsRNA-binding domain-like"/>
    <property type="match status" value="1"/>
</dbReference>
<dbReference type="SUPFAM" id="SSF50494">
    <property type="entry name" value="Trypsin-like serine proteases"/>
    <property type="match status" value="1"/>
</dbReference>
<dbReference type="PROSITE" id="PS50137">
    <property type="entry name" value="DS_RBD"/>
    <property type="match status" value="1"/>
</dbReference>
<dbReference type="PROSITE" id="PS51874">
    <property type="entry name" value="PCV_3C_PRO"/>
    <property type="match status" value="1"/>
</dbReference>
<dbReference type="PROSITE" id="PS50507">
    <property type="entry name" value="RDRP_SSRNA_POS"/>
    <property type="match status" value="1"/>
</dbReference>
<dbReference type="PROSITE" id="PS51218">
    <property type="entry name" value="SF3_HELICASE_2"/>
    <property type="match status" value="1"/>
</dbReference>
<protein>
    <recommendedName>
        <fullName>Replicase polyprotein</fullName>
    </recommendedName>
    <component>
        <recommendedName>
            <fullName>Protein 1A</fullName>
        </recommendedName>
    </component>
    <component>
        <recommendedName>
            <fullName>Protein 2A</fullName>
        </recommendedName>
    </component>
    <component>
        <recommendedName>
            <fullName>Protein 2B</fullName>
        </recommendedName>
    </component>
    <component>
        <recommendedName>
            <fullName>Protein 2C</fullName>
        </recommendedName>
    </component>
    <component>
        <recommendedName>
            <fullName>Protein 3A</fullName>
        </recommendedName>
    </component>
    <component>
        <recommendedName>
            <fullName>Protein 3B</fullName>
        </recommendedName>
    </component>
    <component>
        <recommendedName>
            <fullName>3C-like protease</fullName>
            <ecNumber>3.4.22.-</ecNumber>
        </recommendedName>
    </component>
    <component>
        <recommendedName>
            <fullName>RNA-directed RNA polymerase 3D-POL</fullName>
            <ecNumber>2.7.7.48</ecNumber>
        </recommendedName>
    </component>
</protein>
<organismHost>
    <name type="scientific">Drosophila melanogaster</name>
    <name type="common">Fruit fly</name>
    <dbReference type="NCBI Taxonomy" id="7227"/>
</organismHost>
<keyword id="KW-0067">ATP-binding</keyword>
<keyword id="KW-0175">Coiled coil</keyword>
<keyword id="KW-0347">Helicase</keyword>
<keyword id="KW-0945">Host-virus interaction</keyword>
<keyword id="KW-0378">Hydrolase</keyword>
<keyword id="KW-1090">Inhibition of host innate immune response by virus</keyword>
<keyword id="KW-0547">Nucleotide-binding</keyword>
<keyword id="KW-0548">Nucleotidyltransferase</keyword>
<keyword id="KW-0645">Protease</keyword>
<keyword id="KW-0694">RNA-binding</keyword>
<keyword id="KW-0696">RNA-directed RNA polymerase</keyword>
<keyword id="KW-0941">Suppressor of RNA silencing</keyword>
<keyword id="KW-0788">Thiol protease</keyword>
<keyword id="KW-0808">Transferase</keyword>
<keyword id="KW-0899">Viral immunoevasion</keyword>
<keyword id="KW-0693">Viral RNA replication</keyword>
<gene>
    <name type="ORF">ORF1</name>
</gene>
<name>POLN_DCVEB</name>
<accession>O36966</accession>
<reference key="1">
    <citation type="journal article" date="1998" name="J. Gen. Virol.">
        <title>The novel genome organization of the insect picorna-like virus Drosophila C virus suggests this virus belongs to a previously undescribed virus family.</title>
        <authorList>
            <person name="Johnson K.N."/>
            <person name="Christian P.D."/>
        </authorList>
    </citation>
    <scope>NUCLEOTIDE SEQUENCE [GENOMIC RNA]</scope>
</reference>
<reference key="2">
    <citation type="journal article" date="2006" name="Genes Dev.">
        <title>The RNA silencing endonuclease Argonaute 2 mediates specific antiviral immunity in Drosophila melanogaster.</title>
        <authorList>
            <person name="van Rij R.P."/>
            <person name="Saleh M.C."/>
            <person name="Berry B."/>
            <person name="Foo C."/>
            <person name="Houk A."/>
            <person name="Antoniewski C."/>
            <person name="Andino R."/>
        </authorList>
    </citation>
    <scope>FUNCTION OF PROTEIN 1A</scope>
</reference>
<reference key="3">
    <citation type="journal article" date="2010" name="Nat. Struct. Mol. Biol.">
        <title>Cricket paralysis virus antagonizes Argonaute 2 to modulate antiviral defense in Drosophila.</title>
        <authorList>
            <person name="Nayak A."/>
            <person name="Berry B."/>
            <person name="Tassetto M."/>
            <person name="Kunitomi M."/>
            <person name="Acevedo A."/>
            <person name="Deng C."/>
            <person name="Krutchinsky A."/>
            <person name="Gross J."/>
            <person name="Antoniewski C."/>
            <person name="Andino R."/>
        </authorList>
    </citation>
    <scope>FUNCTION OF PROTEIN 1A</scope>
</reference>
<sequence>MESDKSMACLNRILMNKMMFVEDKISTLKMVADYYQKEVKYDFDAVESPREAPVFRCTCRFLGYTIMTQGIGKKNPKQEAARQMLLLLSGDVETNPGPVQSRPVYYRYNDPRYTRLEKAIERRDDKIKTLIKELRRQIKNRKIYSQGMFDKLTKQISDGIKDGVGSEQMNGNLTRICDFLENTLPGLQANIQATVIDTTDKYVSLKEDIMKIVLVILLVRLLMVWKKYRASLCVILIFIFKFYGFDQKLIDLIMDLKNKIFSQGALEDTVEEVVYHPWFHTCGKIIFAVMAFLTIKKIPGKQDWDSYITRLDRIPKSIEGAKKITDYCSEYFNIANDQIKMMVLGKTKEELQRANGLYGEIQAWAQEVRQYLELDQRNKIDLDTETANRVEQLWIKGLKFKSEPLLSKEMSALVHTTLLPAKQLYEYVSCSPVKGGGPRMRPICLWLVGESGVGKTEMVYPLCIDVLREMGMIKKDDFHHQVYGRQVETEFWDGYKGQKIVIYDDAFQKKDDKTAANPEIFEVIRSCNTFPQHLHMAALHDKNTFSAAELLLYTTNDYNVKLESITFPDAFFNRMGDMAYKVSPKKEYGIETEKGNSGKTYLKLDKSKLDKTKAIDLSVYEFQKIVRDEKSDAGWIDSGSPLDYEDFAKLVCSKWKEAKQSSMNKLKFLEEYAIRAQVGSEENSEYGDCIDFVDDIAKRLQKGETLEEIEFDYASDPEMFTQYYHFKSTIKPASRWQKYKDRMDICLSDCKTYLAKKYEEIKKILAEHPILTILGMIGVALSALAMYYWFSKSLDPVEAEVAPSGDAKTVRLPRKLVEIGASGDVKTQKIVKPVVETEWHRNNKGEIEISCDECGMHRMSAFNNMTDEEFDNCTYEDLNKDQKRELAQWSTKDSWLGRFFLSRDRKNKVGIWAEVGQSGDVKTNKAQIKRVEAGAEELVTVALTQGCSDDAAHNLMIDVFQKNTYRMSYFRGDKRYQLGNCTFVRGWSFIMPYHFVQAVFARRLPPNTIISLSQQMSEDLMQIPLSHFFSAGVDNFYLTDNCVRLPFKNGDFRDCVMVNLHSRMCTPHRDLVRHFILTSDQGKLKGSFSGAMATFHVNNMGLYRVYNWLNAVRPCDKKIEIFHPEDGFEYPEESYIQRDCYEYNAPTRTGDCGSIIGLYNKYLERKIIGMHIAGNDAEEHGYACPLTQECLETAFSALVNKNKKNISSQFYYEIPNMVDPLGDSSVPEGKFYALGKSSIRVGQAVNSSIIPSRIYGKLSVPTMKPALLKPTILNNKVHNPLLSGLKKCGVDTAVLSDDEVLSASQDVCRVMLNQYNKNLNKTKYQRILTYEEAIRGTQDDEFMCAINRTTSPGFPYAQMKRNAPGKQQWMGFGEEFDFTSNYALALRKDVEQLIEDCASGKISNVIFVDTLKDERRDIAKVNVGKTRVFSAGPQHFVVAFRQYFLPFAAWLMHNRISNEVAVGTNVYSSDWERIAKRLKTKGSHVIAGDFGNFDGSLVAQILWAIFWEIFVVWLKQFIDIENSEGKRILCICLGLWSHLVHSVHIYEDNVYMWTHSQPSGNPFTVIINCLYNSIIMRLSWIRVMEKFQPRLKSMKWFNEYVALITYGDDNVLNIDAKVVEWFNQINISEVMTEMRHEYTDEAKTGDIVKSRKLEDIFFLKRKFRFSPELQRHVAPLKIEVIYEMLNWSRRSIDPDEILMSNIETAFREVVYHGKEEYDKLRSAVLALKVPQELPENPQILTYNQYLHDIEYLADPLYDF</sequence>